<proteinExistence type="inferred from homology"/>
<comment type="function">
    <text evidence="1">Catalyzes the reversible adenylation of nicotinate mononucleotide (NaMN) to nicotinic acid adenine dinucleotide (NaAD).</text>
</comment>
<comment type="catalytic activity">
    <reaction evidence="1">
        <text>nicotinate beta-D-ribonucleotide + ATP + H(+) = deamido-NAD(+) + diphosphate</text>
        <dbReference type="Rhea" id="RHEA:22860"/>
        <dbReference type="ChEBI" id="CHEBI:15378"/>
        <dbReference type="ChEBI" id="CHEBI:30616"/>
        <dbReference type="ChEBI" id="CHEBI:33019"/>
        <dbReference type="ChEBI" id="CHEBI:57502"/>
        <dbReference type="ChEBI" id="CHEBI:58437"/>
        <dbReference type="EC" id="2.7.7.18"/>
    </reaction>
</comment>
<comment type="pathway">
    <text evidence="1">Cofactor biosynthesis; NAD(+) biosynthesis; deamido-NAD(+) from nicotinate D-ribonucleotide: step 1/1.</text>
</comment>
<comment type="similarity">
    <text evidence="1">Belongs to the NadD family.</text>
</comment>
<sequence length="199" mass="21952">MSSAPIGILGGTFDPIHYGHLAIAEEVRVALRLDRVLIIPAGEQPLKIGKHMAPPEHRLAMARLACADNPFFEVSSIEIDRPGPSYTHVTLQLLHDQGLENLYLILGADALADLPRWRETPRILTLARIVVVSRPGAAIDLPALAEMFPALPERLILIEGPRLDISSTDLRQRVAQGRPIRYQTPDAVVAYIEAHGLYR</sequence>
<dbReference type="EC" id="2.7.7.18" evidence="1"/>
<dbReference type="EMBL" id="CP000686">
    <property type="protein sequence ID" value="ABQ90597.1"/>
    <property type="molecule type" value="Genomic_DNA"/>
</dbReference>
<dbReference type="RefSeq" id="WP_011956943.1">
    <property type="nucleotide sequence ID" value="NC_009523.1"/>
</dbReference>
<dbReference type="SMR" id="A5UVE4"/>
<dbReference type="STRING" id="357808.RoseRS_2217"/>
<dbReference type="KEGG" id="rrs:RoseRS_2217"/>
<dbReference type="eggNOG" id="COG1057">
    <property type="taxonomic scope" value="Bacteria"/>
</dbReference>
<dbReference type="HOGENOM" id="CLU_069765_1_1_0"/>
<dbReference type="OrthoDB" id="5295945at2"/>
<dbReference type="UniPathway" id="UPA00253">
    <property type="reaction ID" value="UER00332"/>
</dbReference>
<dbReference type="Proteomes" id="UP000006554">
    <property type="component" value="Chromosome"/>
</dbReference>
<dbReference type="GO" id="GO:0005524">
    <property type="term" value="F:ATP binding"/>
    <property type="evidence" value="ECO:0007669"/>
    <property type="project" value="UniProtKB-KW"/>
</dbReference>
<dbReference type="GO" id="GO:0004515">
    <property type="term" value="F:nicotinate-nucleotide adenylyltransferase activity"/>
    <property type="evidence" value="ECO:0007669"/>
    <property type="project" value="UniProtKB-UniRule"/>
</dbReference>
<dbReference type="GO" id="GO:0009435">
    <property type="term" value="P:NAD biosynthetic process"/>
    <property type="evidence" value="ECO:0007669"/>
    <property type="project" value="UniProtKB-UniRule"/>
</dbReference>
<dbReference type="CDD" id="cd02165">
    <property type="entry name" value="NMNAT"/>
    <property type="match status" value="1"/>
</dbReference>
<dbReference type="Gene3D" id="3.40.50.620">
    <property type="entry name" value="HUPs"/>
    <property type="match status" value="1"/>
</dbReference>
<dbReference type="HAMAP" id="MF_00244">
    <property type="entry name" value="NaMN_adenylyltr"/>
    <property type="match status" value="1"/>
</dbReference>
<dbReference type="InterPro" id="IPR004821">
    <property type="entry name" value="Cyt_trans-like"/>
</dbReference>
<dbReference type="InterPro" id="IPR005248">
    <property type="entry name" value="NadD/NMNAT"/>
</dbReference>
<dbReference type="InterPro" id="IPR014729">
    <property type="entry name" value="Rossmann-like_a/b/a_fold"/>
</dbReference>
<dbReference type="NCBIfam" id="TIGR00125">
    <property type="entry name" value="cyt_tran_rel"/>
    <property type="match status" value="1"/>
</dbReference>
<dbReference type="NCBIfam" id="TIGR00482">
    <property type="entry name" value="nicotinate (nicotinamide) nucleotide adenylyltransferase"/>
    <property type="match status" value="1"/>
</dbReference>
<dbReference type="NCBIfam" id="NF000840">
    <property type="entry name" value="PRK00071.1-3"/>
    <property type="match status" value="1"/>
</dbReference>
<dbReference type="PANTHER" id="PTHR39321">
    <property type="entry name" value="NICOTINATE-NUCLEOTIDE ADENYLYLTRANSFERASE-RELATED"/>
    <property type="match status" value="1"/>
</dbReference>
<dbReference type="PANTHER" id="PTHR39321:SF3">
    <property type="entry name" value="PHOSPHOPANTETHEINE ADENYLYLTRANSFERASE"/>
    <property type="match status" value="1"/>
</dbReference>
<dbReference type="Pfam" id="PF01467">
    <property type="entry name" value="CTP_transf_like"/>
    <property type="match status" value="1"/>
</dbReference>
<dbReference type="SUPFAM" id="SSF52374">
    <property type="entry name" value="Nucleotidylyl transferase"/>
    <property type="match status" value="1"/>
</dbReference>
<reference key="1">
    <citation type="submission" date="2007-04" db="EMBL/GenBank/DDBJ databases">
        <title>Complete sequence of Roseiflexus sp. RS-1.</title>
        <authorList>
            <consortium name="US DOE Joint Genome Institute"/>
            <person name="Copeland A."/>
            <person name="Lucas S."/>
            <person name="Lapidus A."/>
            <person name="Barry K."/>
            <person name="Detter J.C."/>
            <person name="Glavina del Rio T."/>
            <person name="Hammon N."/>
            <person name="Israni S."/>
            <person name="Dalin E."/>
            <person name="Tice H."/>
            <person name="Pitluck S."/>
            <person name="Chertkov O."/>
            <person name="Brettin T."/>
            <person name="Bruce D."/>
            <person name="Han C."/>
            <person name="Schmutz J."/>
            <person name="Larimer F."/>
            <person name="Land M."/>
            <person name="Hauser L."/>
            <person name="Kyrpides N."/>
            <person name="Mikhailova N."/>
            <person name="Bryant D.A."/>
            <person name="Richardson P."/>
        </authorList>
    </citation>
    <scope>NUCLEOTIDE SEQUENCE [LARGE SCALE GENOMIC DNA]</scope>
    <source>
        <strain>RS-1</strain>
    </source>
</reference>
<keyword id="KW-0067">ATP-binding</keyword>
<keyword id="KW-0520">NAD</keyword>
<keyword id="KW-0547">Nucleotide-binding</keyword>
<keyword id="KW-0548">Nucleotidyltransferase</keyword>
<keyword id="KW-0662">Pyridine nucleotide biosynthesis</keyword>
<keyword id="KW-0808">Transferase</keyword>
<evidence type="ECO:0000255" key="1">
    <source>
        <dbReference type="HAMAP-Rule" id="MF_00244"/>
    </source>
</evidence>
<feature type="chain" id="PRO_0000336730" description="Probable nicotinate-nucleotide adenylyltransferase">
    <location>
        <begin position="1"/>
        <end position="199"/>
    </location>
</feature>
<organism>
    <name type="scientific">Roseiflexus sp. (strain RS-1)</name>
    <dbReference type="NCBI Taxonomy" id="357808"/>
    <lineage>
        <taxon>Bacteria</taxon>
        <taxon>Bacillati</taxon>
        <taxon>Chloroflexota</taxon>
        <taxon>Chloroflexia</taxon>
        <taxon>Chloroflexales</taxon>
        <taxon>Roseiflexineae</taxon>
        <taxon>Roseiflexaceae</taxon>
        <taxon>Roseiflexus</taxon>
    </lineage>
</organism>
<accession>A5UVE4</accession>
<protein>
    <recommendedName>
        <fullName evidence="1">Probable nicotinate-nucleotide adenylyltransferase</fullName>
        <ecNumber evidence="1">2.7.7.18</ecNumber>
    </recommendedName>
    <alternativeName>
        <fullName evidence="1">Deamido-NAD(+) diphosphorylase</fullName>
    </alternativeName>
    <alternativeName>
        <fullName evidence="1">Deamido-NAD(+) pyrophosphorylase</fullName>
    </alternativeName>
    <alternativeName>
        <fullName evidence="1">Nicotinate mononucleotide adenylyltransferase</fullName>
        <shortName evidence="1">NaMN adenylyltransferase</shortName>
    </alternativeName>
</protein>
<gene>
    <name evidence="1" type="primary">nadD</name>
    <name type="ordered locus">RoseRS_2217</name>
</gene>
<name>NADD_ROSS1</name>